<reference key="1">
    <citation type="submission" date="2005-09" db="EMBL/GenBank/DDBJ databases">
        <title>Complete sequence of chromosome 1 of Rhodobacter sphaeroides 2.4.1.</title>
        <authorList>
            <person name="Copeland A."/>
            <person name="Lucas S."/>
            <person name="Lapidus A."/>
            <person name="Barry K."/>
            <person name="Detter J.C."/>
            <person name="Glavina T."/>
            <person name="Hammon N."/>
            <person name="Israni S."/>
            <person name="Pitluck S."/>
            <person name="Richardson P."/>
            <person name="Mackenzie C."/>
            <person name="Choudhary M."/>
            <person name="Larimer F."/>
            <person name="Hauser L.J."/>
            <person name="Land M."/>
            <person name="Donohue T.J."/>
            <person name="Kaplan S."/>
        </authorList>
    </citation>
    <scope>NUCLEOTIDE SEQUENCE [LARGE SCALE GENOMIC DNA]</scope>
    <source>
        <strain>ATCC 17023 / DSM 158 / JCM 6121 / CCUG 31486 / LMG 2827 / NBRC 12203 / NCIMB 8253 / ATH 2.4.1.</strain>
    </source>
</reference>
<gene>
    <name evidence="1" type="primary">gloB</name>
    <name type="ordered locus">RHOS4_08800</name>
    <name type="ORF">RSP_2294</name>
</gene>
<dbReference type="EC" id="3.1.2.6" evidence="1"/>
<dbReference type="EMBL" id="CP000143">
    <property type="protein sequence ID" value="ABA78448.1"/>
    <property type="molecule type" value="Genomic_DNA"/>
</dbReference>
<dbReference type="RefSeq" id="WP_011337385.1">
    <property type="nucleotide sequence ID" value="NZ_CP030271.1"/>
</dbReference>
<dbReference type="RefSeq" id="YP_352349.1">
    <property type="nucleotide sequence ID" value="NC_007493.2"/>
</dbReference>
<dbReference type="SMR" id="Q3J436"/>
<dbReference type="STRING" id="272943.RSP_2294"/>
<dbReference type="EnsemblBacteria" id="ABA78448">
    <property type="protein sequence ID" value="ABA78448"/>
    <property type="gene ID" value="RSP_2294"/>
</dbReference>
<dbReference type="GeneID" id="67446065"/>
<dbReference type="KEGG" id="rsp:RSP_2294"/>
<dbReference type="PATRIC" id="fig|272943.9.peg.1204"/>
<dbReference type="eggNOG" id="COG0491">
    <property type="taxonomic scope" value="Bacteria"/>
</dbReference>
<dbReference type="OrthoDB" id="9802248at2"/>
<dbReference type="PhylomeDB" id="Q3J436"/>
<dbReference type="UniPathway" id="UPA00619">
    <property type="reaction ID" value="UER00676"/>
</dbReference>
<dbReference type="Proteomes" id="UP000002703">
    <property type="component" value="Chromosome 1"/>
</dbReference>
<dbReference type="GO" id="GO:0004416">
    <property type="term" value="F:hydroxyacylglutathione hydrolase activity"/>
    <property type="evidence" value="ECO:0007669"/>
    <property type="project" value="UniProtKB-UniRule"/>
</dbReference>
<dbReference type="GO" id="GO:0046872">
    <property type="term" value="F:metal ion binding"/>
    <property type="evidence" value="ECO:0007669"/>
    <property type="project" value="UniProtKB-KW"/>
</dbReference>
<dbReference type="GO" id="GO:0019243">
    <property type="term" value="P:methylglyoxal catabolic process to D-lactate via S-lactoyl-glutathione"/>
    <property type="evidence" value="ECO:0007669"/>
    <property type="project" value="InterPro"/>
</dbReference>
<dbReference type="CDD" id="cd07723">
    <property type="entry name" value="hydroxyacylglutathione_hydrolase_MBL-fold"/>
    <property type="match status" value="1"/>
</dbReference>
<dbReference type="Gene3D" id="3.60.15.10">
    <property type="entry name" value="Ribonuclease Z/Hydroxyacylglutathione hydrolase-like"/>
    <property type="match status" value="1"/>
</dbReference>
<dbReference type="HAMAP" id="MF_01374">
    <property type="entry name" value="Glyoxalase_2"/>
    <property type="match status" value="1"/>
</dbReference>
<dbReference type="InterPro" id="IPR035680">
    <property type="entry name" value="Clx_II_MBL"/>
</dbReference>
<dbReference type="InterPro" id="IPR050110">
    <property type="entry name" value="Glyoxalase_II_hydrolase"/>
</dbReference>
<dbReference type="InterPro" id="IPR032282">
    <property type="entry name" value="HAGH_C"/>
</dbReference>
<dbReference type="InterPro" id="IPR017782">
    <property type="entry name" value="Hydroxyacylglutathione_Hdrlase"/>
</dbReference>
<dbReference type="InterPro" id="IPR001279">
    <property type="entry name" value="Metallo-B-lactamas"/>
</dbReference>
<dbReference type="InterPro" id="IPR036866">
    <property type="entry name" value="RibonucZ/Hydroxyglut_hydro"/>
</dbReference>
<dbReference type="NCBIfam" id="TIGR03413">
    <property type="entry name" value="GSH_gloB"/>
    <property type="match status" value="1"/>
</dbReference>
<dbReference type="PANTHER" id="PTHR43705">
    <property type="entry name" value="HYDROXYACYLGLUTATHIONE HYDROLASE"/>
    <property type="match status" value="1"/>
</dbReference>
<dbReference type="PANTHER" id="PTHR43705:SF1">
    <property type="entry name" value="HYDROXYACYLGLUTATHIONE HYDROLASE GLOB"/>
    <property type="match status" value="1"/>
</dbReference>
<dbReference type="Pfam" id="PF16123">
    <property type="entry name" value="HAGH_C"/>
    <property type="match status" value="1"/>
</dbReference>
<dbReference type="Pfam" id="PF00753">
    <property type="entry name" value="Lactamase_B"/>
    <property type="match status" value="1"/>
</dbReference>
<dbReference type="PIRSF" id="PIRSF005457">
    <property type="entry name" value="Glx"/>
    <property type="match status" value="1"/>
</dbReference>
<dbReference type="SMART" id="SM00849">
    <property type="entry name" value="Lactamase_B"/>
    <property type="match status" value="1"/>
</dbReference>
<dbReference type="SUPFAM" id="SSF56281">
    <property type="entry name" value="Metallo-hydrolase/oxidoreductase"/>
    <property type="match status" value="1"/>
</dbReference>
<sequence length="255" mass="27203">MPLELVTVPCLSDNYAFLVHDAGTGETSVVDVPEAGPILKALEERGWHLSQILLTHHHSDHVAGVEELRAATGARVAGAAADAHRLPPLDLELAEGDLVRVGASEGRVIEVPGHTVGHIAFHFPDSSLAFTGDSLMAMGCGRLFEGTAEAMWQSLRKLSALPPETMICSGHEYAASNARFAATLEPDSPMLIFRVGSIAAARKEGRPTVPSHLSDEIATNPFLRAGEASLKAAVGMVDAEDAEVFAEIRRRKDKF</sequence>
<keyword id="KW-0378">Hydrolase</keyword>
<keyword id="KW-0479">Metal-binding</keyword>
<keyword id="KW-1185">Reference proteome</keyword>
<keyword id="KW-0862">Zinc</keyword>
<organism>
    <name type="scientific">Cereibacter sphaeroides (strain ATCC 17023 / DSM 158 / JCM 6121 / CCUG 31486 / LMG 2827 / NBRC 12203 / NCIMB 8253 / ATH 2.4.1.)</name>
    <name type="common">Rhodobacter sphaeroides</name>
    <dbReference type="NCBI Taxonomy" id="272943"/>
    <lineage>
        <taxon>Bacteria</taxon>
        <taxon>Pseudomonadati</taxon>
        <taxon>Pseudomonadota</taxon>
        <taxon>Alphaproteobacteria</taxon>
        <taxon>Rhodobacterales</taxon>
        <taxon>Paracoccaceae</taxon>
        <taxon>Cereibacter</taxon>
    </lineage>
</organism>
<name>GLO2_CERS4</name>
<accession>Q3J436</accession>
<protein>
    <recommendedName>
        <fullName evidence="1">Hydroxyacylglutathione hydrolase</fullName>
        <ecNumber evidence="1">3.1.2.6</ecNumber>
    </recommendedName>
    <alternativeName>
        <fullName evidence="1">Glyoxalase II</fullName>
        <shortName evidence="1">Glx II</shortName>
    </alternativeName>
</protein>
<proteinExistence type="inferred from homology"/>
<evidence type="ECO:0000255" key="1">
    <source>
        <dbReference type="HAMAP-Rule" id="MF_01374"/>
    </source>
</evidence>
<comment type="function">
    <text evidence="1">Thiolesterase that catalyzes the hydrolysis of S-D-lactoyl-glutathione to form glutathione and D-lactic acid.</text>
</comment>
<comment type="catalytic activity">
    <reaction evidence="1">
        <text>an S-(2-hydroxyacyl)glutathione + H2O = a 2-hydroxy carboxylate + glutathione + H(+)</text>
        <dbReference type="Rhea" id="RHEA:21864"/>
        <dbReference type="ChEBI" id="CHEBI:15377"/>
        <dbReference type="ChEBI" id="CHEBI:15378"/>
        <dbReference type="ChEBI" id="CHEBI:57925"/>
        <dbReference type="ChEBI" id="CHEBI:58896"/>
        <dbReference type="ChEBI" id="CHEBI:71261"/>
        <dbReference type="EC" id="3.1.2.6"/>
    </reaction>
</comment>
<comment type="cofactor">
    <cofactor evidence="1">
        <name>Zn(2+)</name>
        <dbReference type="ChEBI" id="CHEBI:29105"/>
    </cofactor>
    <text evidence="1">Binds 2 Zn(2+) ions per subunit.</text>
</comment>
<comment type="pathway">
    <text evidence="1">Secondary metabolite metabolism; methylglyoxal degradation; (R)-lactate from methylglyoxal: step 2/2.</text>
</comment>
<comment type="subunit">
    <text evidence="1">Monomer.</text>
</comment>
<comment type="similarity">
    <text evidence="1">Belongs to the metallo-beta-lactamase superfamily. Glyoxalase II family.</text>
</comment>
<feature type="chain" id="PRO_0000309689" description="Hydroxyacylglutathione hydrolase">
    <location>
        <begin position="1"/>
        <end position="255"/>
    </location>
</feature>
<feature type="binding site" evidence="1">
    <location>
        <position position="56"/>
    </location>
    <ligand>
        <name>Zn(2+)</name>
        <dbReference type="ChEBI" id="CHEBI:29105"/>
        <label>1</label>
    </ligand>
</feature>
<feature type="binding site" evidence="1">
    <location>
        <position position="58"/>
    </location>
    <ligand>
        <name>Zn(2+)</name>
        <dbReference type="ChEBI" id="CHEBI:29105"/>
        <label>1</label>
    </ligand>
</feature>
<feature type="binding site" evidence="1">
    <location>
        <position position="60"/>
    </location>
    <ligand>
        <name>Zn(2+)</name>
        <dbReference type="ChEBI" id="CHEBI:29105"/>
        <label>2</label>
    </ligand>
</feature>
<feature type="binding site" evidence="1">
    <location>
        <position position="61"/>
    </location>
    <ligand>
        <name>Zn(2+)</name>
        <dbReference type="ChEBI" id="CHEBI:29105"/>
        <label>2</label>
    </ligand>
</feature>
<feature type="binding site" evidence="1">
    <location>
        <position position="114"/>
    </location>
    <ligand>
        <name>Zn(2+)</name>
        <dbReference type="ChEBI" id="CHEBI:29105"/>
        <label>1</label>
    </ligand>
</feature>
<feature type="binding site" evidence="1">
    <location>
        <position position="133"/>
    </location>
    <ligand>
        <name>Zn(2+)</name>
        <dbReference type="ChEBI" id="CHEBI:29105"/>
        <label>1</label>
    </ligand>
</feature>
<feature type="binding site" evidence="1">
    <location>
        <position position="133"/>
    </location>
    <ligand>
        <name>Zn(2+)</name>
        <dbReference type="ChEBI" id="CHEBI:29105"/>
        <label>2</label>
    </ligand>
</feature>
<feature type="binding site" evidence="1">
    <location>
        <position position="171"/>
    </location>
    <ligand>
        <name>Zn(2+)</name>
        <dbReference type="ChEBI" id="CHEBI:29105"/>
        <label>2</label>
    </ligand>
</feature>